<dbReference type="EC" id="4.1.3.27"/>
<dbReference type="EMBL" id="AL590842">
    <property type="protein sequence ID" value="CAL20836.1"/>
    <property type="molecule type" value="Genomic_DNA"/>
</dbReference>
<dbReference type="EMBL" id="AE009952">
    <property type="status" value="NOT_ANNOTATED_CDS"/>
    <property type="molecule type" value="Genomic_DNA"/>
</dbReference>
<dbReference type="EMBL" id="AE017042">
    <property type="protein sequence ID" value="AAS62221.1"/>
    <property type="molecule type" value="Genomic_DNA"/>
</dbReference>
<dbReference type="PIR" id="AI0268">
    <property type="entry name" value="AI0268"/>
</dbReference>
<dbReference type="RefSeq" id="YP_002347178.1">
    <property type="nucleotide sequence ID" value="NC_003143.1"/>
</dbReference>
<dbReference type="SMR" id="Q8ZEG6"/>
<dbReference type="STRING" id="214092.YPO2207"/>
<dbReference type="MEROPS" id="C26.960"/>
<dbReference type="PaxDb" id="214092-YPO2207"/>
<dbReference type="EnsemblBacteria" id="AAS62221">
    <property type="protein sequence ID" value="AAS62221"/>
    <property type="gene ID" value="YP_2005"/>
</dbReference>
<dbReference type="KEGG" id="ype:YPO2207"/>
<dbReference type="KEGG" id="ypm:YP_2005"/>
<dbReference type="PATRIC" id="fig|214092.21.peg.2604"/>
<dbReference type="eggNOG" id="COG0512">
    <property type="taxonomic scope" value="Bacteria"/>
</dbReference>
<dbReference type="HOGENOM" id="CLU_014340_1_0_6"/>
<dbReference type="OMA" id="HDNEAMF"/>
<dbReference type="OrthoDB" id="9806430at2"/>
<dbReference type="UniPathway" id="UPA00035">
    <property type="reaction ID" value="UER00040"/>
</dbReference>
<dbReference type="Proteomes" id="UP000000815">
    <property type="component" value="Chromosome"/>
</dbReference>
<dbReference type="Proteomes" id="UP000001019">
    <property type="component" value="Chromosome"/>
</dbReference>
<dbReference type="Proteomes" id="UP000002490">
    <property type="component" value="Chromosome"/>
</dbReference>
<dbReference type="GO" id="GO:0004048">
    <property type="term" value="F:anthranilate phosphoribosyltransferase activity"/>
    <property type="evidence" value="ECO:0000318"/>
    <property type="project" value="GO_Central"/>
</dbReference>
<dbReference type="GO" id="GO:0004049">
    <property type="term" value="F:anthranilate synthase activity"/>
    <property type="evidence" value="ECO:0007669"/>
    <property type="project" value="UniProtKB-EC"/>
</dbReference>
<dbReference type="GO" id="GO:0000162">
    <property type="term" value="P:L-tryptophan biosynthetic process"/>
    <property type="evidence" value="ECO:0000318"/>
    <property type="project" value="GO_Central"/>
</dbReference>
<dbReference type="GO" id="GO:0002047">
    <property type="term" value="P:phenazine biosynthetic process"/>
    <property type="evidence" value="ECO:0000318"/>
    <property type="project" value="GO_Central"/>
</dbReference>
<dbReference type="CDD" id="cd01743">
    <property type="entry name" value="GATase1_Anthranilate_Synthase"/>
    <property type="match status" value="1"/>
</dbReference>
<dbReference type="FunFam" id="3.40.50.880:FF:000003">
    <property type="entry name" value="Anthranilate synthase component II"/>
    <property type="match status" value="1"/>
</dbReference>
<dbReference type="Gene3D" id="3.40.50.880">
    <property type="match status" value="1"/>
</dbReference>
<dbReference type="InterPro" id="IPR050472">
    <property type="entry name" value="Anth_synth/Amidotransfase"/>
</dbReference>
<dbReference type="InterPro" id="IPR029062">
    <property type="entry name" value="Class_I_gatase-like"/>
</dbReference>
<dbReference type="InterPro" id="IPR017926">
    <property type="entry name" value="GATASE"/>
</dbReference>
<dbReference type="InterPro" id="IPR006221">
    <property type="entry name" value="TrpG/PapA_dom"/>
</dbReference>
<dbReference type="NCBIfam" id="TIGR00566">
    <property type="entry name" value="trpG_papA"/>
    <property type="match status" value="1"/>
</dbReference>
<dbReference type="PANTHER" id="PTHR43418:SF2">
    <property type="entry name" value="BIFUNCTIONAL PROTEIN TRPGD"/>
    <property type="match status" value="1"/>
</dbReference>
<dbReference type="PANTHER" id="PTHR43418">
    <property type="entry name" value="MULTIFUNCTIONAL TRYPTOPHAN BIOSYNTHESIS PROTEIN-RELATED"/>
    <property type="match status" value="1"/>
</dbReference>
<dbReference type="Pfam" id="PF00117">
    <property type="entry name" value="GATase"/>
    <property type="match status" value="1"/>
</dbReference>
<dbReference type="PRINTS" id="PR00097">
    <property type="entry name" value="ANTSNTHASEII"/>
</dbReference>
<dbReference type="PRINTS" id="PR00099">
    <property type="entry name" value="CPSGATASE"/>
</dbReference>
<dbReference type="PRINTS" id="PR00096">
    <property type="entry name" value="GATASE"/>
</dbReference>
<dbReference type="SUPFAM" id="SSF52317">
    <property type="entry name" value="Class I glutamine amidotransferase-like"/>
    <property type="match status" value="1"/>
</dbReference>
<dbReference type="PROSITE" id="PS51273">
    <property type="entry name" value="GATASE_TYPE_1"/>
    <property type="match status" value="1"/>
</dbReference>
<feature type="chain" id="PRO_0000056905" description="Anthranilate synthase component 2">
    <location>
        <begin position="1"/>
        <end position="192"/>
    </location>
</feature>
<feature type="domain" description="Glutamine amidotransferase type-1" evidence="3">
    <location>
        <begin position="3"/>
        <end position="192"/>
    </location>
</feature>
<feature type="active site" description="Nucleophile; for GATase activity" evidence="3">
    <location>
        <position position="84"/>
    </location>
</feature>
<feature type="active site" description="For GATase activity" evidence="3">
    <location>
        <position position="170"/>
    </location>
</feature>
<feature type="active site" description="For GATase activity" evidence="3">
    <location>
        <position position="172"/>
    </location>
</feature>
<feature type="binding site" evidence="2">
    <location>
        <begin position="57"/>
        <end position="59"/>
    </location>
    <ligand>
        <name>L-glutamine</name>
        <dbReference type="ChEBI" id="CHEBI:58359"/>
    </ligand>
</feature>
<feature type="binding site" evidence="2">
    <location>
        <position position="88"/>
    </location>
    <ligand>
        <name>L-glutamine</name>
        <dbReference type="ChEBI" id="CHEBI:58359"/>
    </ligand>
</feature>
<feature type="binding site" evidence="2">
    <location>
        <begin position="134"/>
        <end position="135"/>
    </location>
    <ligand>
        <name>L-glutamine</name>
        <dbReference type="ChEBI" id="CHEBI:58359"/>
    </ligand>
</feature>
<comment type="function">
    <text evidence="1">Part of a heterotetrameric complex that catalyzes the two-step biosynthesis of anthranilate, an intermediate in the biosynthesis of L-tryptophan. In the first step, the glutamine-binding beta subunit (TrpG) of anthranilate synthase (AS) provides the glutamine amidotransferase activity which generates ammonia as a substrate that, along with chorismate, is used in the second step, catalyzed by the large alpha subunit of AS (TrpE) to produce anthranilate. In the absence of TrpG, TrpE can synthesize anthranilate directly from chorismate and high concentrations of ammonia (By similarity).</text>
</comment>
<comment type="catalytic activity">
    <reaction>
        <text>chorismate + L-glutamine = anthranilate + pyruvate + L-glutamate + H(+)</text>
        <dbReference type="Rhea" id="RHEA:21732"/>
        <dbReference type="ChEBI" id="CHEBI:15361"/>
        <dbReference type="ChEBI" id="CHEBI:15378"/>
        <dbReference type="ChEBI" id="CHEBI:16567"/>
        <dbReference type="ChEBI" id="CHEBI:29748"/>
        <dbReference type="ChEBI" id="CHEBI:29985"/>
        <dbReference type="ChEBI" id="CHEBI:58359"/>
        <dbReference type="EC" id="4.1.3.27"/>
    </reaction>
</comment>
<comment type="pathway">
    <text>Amino-acid biosynthesis; L-tryptophan biosynthesis; L-tryptophan from chorismate: step 1/5.</text>
</comment>
<comment type="subunit">
    <text evidence="1">Heterotetramer consisting of two non-identical subunits: a beta subunit (TrpG) and a large alpha subunit (TrpE).</text>
</comment>
<evidence type="ECO:0000250" key="1"/>
<evidence type="ECO:0000250" key="2">
    <source>
        <dbReference type="UniProtKB" id="P00900"/>
    </source>
</evidence>
<evidence type="ECO:0000255" key="3">
    <source>
        <dbReference type="PROSITE-ProRule" id="PRU00605"/>
    </source>
</evidence>
<name>TRPG_YERPE</name>
<organism>
    <name type="scientific">Yersinia pestis</name>
    <dbReference type="NCBI Taxonomy" id="632"/>
    <lineage>
        <taxon>Bacteria</taxon>
        <taxon>Pseudomonadati</taxon>
        <taxon>Pseudomonadota</taxon>
        <taxon>Gammaproteobacteria</taxon>
        <taxon>Enterobacterales</taxon>
        <taxon>Yersiniaceae</taxon>
        <taxon>Yersinia</taxon>
    </lineage>
</organism>
<gene>
    <name type="primary">trpG</name>
    <name type="ordered locus">YPO2207</name>
    <name type="ordered locus">y2050.1</name>
    <name type="ordered locus">YP_2005</name>
</gene>
<reference key="1">
    <citation type="journal article" date="2001" name="Nature">
        <title>Genome sequence of Yersinia pestis, the causative agent of plague.</title>
        <authorList>
            <person name="Parkhill J."/>
            <person name="Wren B.W."/>
            <person name="Thomson N.R."/>
            <person name="Titball R.W."/>
            <person name="Holden M.T.G."/>
            <person name="Prentice M.B."/>
            <person name="Sebaihia M."/>
            <person name="James K.D."/>
            <person name="Churcher C.M."/>
            <person name="Mungall K.L."/>
            <person name="Baker S."/>
            <person name="Basham D."/>
            <person name="Bentley S.D."/>
            <person name="Brooks K."/>
            <person name="Cerdeno-Tarraga A.-M."/>
            <person name="Chillingworth T."/>
            <person name="Cronin A."/>
            <person name="Davies R.M."/>
            <person name="Davis P."/>
            <person name="Dougan G."/>
            <person name="Feltwell T."/>
            <person name="Hamlin N."/>
            <person name="Holroyd S."/>
            <person name="Jagels K."/>
            <person name="Karlyshev A.V."/>
            <person name="Leather S."/>
            <person name="Moule S."/>
            <person name="Oyston P.C.F."/>
            <person name="Quail M.A."/>
            <person name="Rutherford K.M."/>
            <person name="Simmonds M."/>
            <person name="Skelton J."/>
            <person name="Stevens K."/>
            <person name="Whitehead S."/>
            <person name="Barrell B.G."/>
        </authorList>
    </citation>
    <scope>NUCLEOTIDE SEQUENCE [LARGE SCALE GENOMIC DNA]</scope>
    <source>
        <strain>CO-92 / Biovar Orientalis</strain>
    </source>
</reference>
<reference key="2">
    <citation type="journal article" date="2002" name="J. Bacteriol.">
        <title>Genome sequence of Yersinia pestis KIM.</title>
        <authorList>
            <person name="Deng W."/>
            <person name="Burland V."/>
            <person name="Plunkett G. III"/>
            <person name="Boutin A."/>
            <person name="Mayhew G.F."/>
            <person name="Liss P."/>
            <person name="Perna N.T."/>
            <person name="Rose D.J."/>
            <person name="Mau B."/>
            <person name="Zhou S."/>
            <person name="Schwartz D.C."/>
            <person name="Fetherston J.D."/>
            <person name="Lindler L.E."/>
            <person name="Brubaker R.R."/>
            <person name="Plano G.V."/>
            <person name="Straley S.C."/>
            <person name="McDonough K.A."/>
            <person name="Nilles M.L."/>
            <person name="Matson J.S."/>
            <person name="Blattner F.R."/>
            <person name="Perry R.D."/>
        </authorList>
    </citation>
    <scope>NUCLEOTIDE SEQUENCE [LARGE SCALE GENOMIC DNA]</scope>
    <source>
        <strain>KIM10+ / Biovar Mediaevalis</strain>
    </source>
</reference>
<reference key="3">
    <citation type="journal article" date="2004" name="DNA Res.">
        <title>Complete genome sequence of Yersinia pestis strain 91001, an isolate avirulent to humans.</title>
        <authorList>
            <person name="Song Y."/>
            <person name="Tong Z."/>
            <person name="Wang J."/>
            <person name="Wang L."/>
            <person name="Guo Z."/>
            <person name="Han Y."/>
            <person name="Zhang J."/>
            <person name="Pei D."/>
            <person name="Zhou D."/>
            <person name="Qin H."/>
            <person name="Pang X."/>
            <person name="Han Y."/>
            <person name="Zhai J."/>
            <person name="Li M."/>
            <person name="Cui B."/>
            <person name="Qi Z."/>
            <person name="Jin L."/>
            <person name="Dai R."/>
            <person name="Chen F."/>
            <person name="Li S."/>
            <person name="Ye C."/>
            <person name="Du Z."/>
            <person name="Lin W."/>
            <person name="Wang J."/>
            <person name="Yu J."/>
            <person name="Yang H."/>
            <person name="Wang J."/>
            <person name="Huang P."/>
            <person name="Yang R."/>
        </authorList>
    </citation>
    <scope>NUCLEOTIDE SEQUENCE [LARGE SCALE GENOMIC DNA]</scope>
    <source>
        <strain>91001 / Biovar Mediaevalis</strain>
    </source>
</reference>
<keyword id="KW-0028">Amino-acid biosynthesis</keyword>
<keyword id="KW-0057">Aromatic amino acid biosynthesis</keyword>
<keyword id="KW-0315">Glutamine amidotransferase</keyword>
<keyword id="KW-0456">Lyase</keyword>
<keyword id="KW-1185">Reference proteome</keyword>
<keyword id="KW-0822">Tryptophan biosynthesis</keyword>
<protein>
    <recommendedName>
        <fullName>Anthranilate synthase component 2</fullName>
        <shortName>AS</shortName>
        <shortName>ASII</shortName>
        <ecNumber>4.1.3.27</ecNumber>
    </recommendedName>
    <alternativeName>
        <fullName>Anthranilate synthase, GATase component</fullName>
    </alternativeName>
    <alternativeName>
        <fullName>Anthranilate synthase, glutamine amidotransferase component</fullName>
    </alternativeName>
</protein>
<accession>Q8ZEG6</accession>
<accession>Q0WEW0</accession>
<sequence length="192" mass="20882">MADILLLDNIDSFTYNLVDQLRSSGHRVVIYRNHIAADNIIERLQQLEQPVLMLSPGPGTPAQAGCMPELLQRLQGQLPMIGICLGHQAIIEAYGGHVGQAGEILHGKASAIEHDGQGMFAGMPNPLPVARYHSLVGSNLPAELTVNARFGEMVMAVRHDAHRVCGYQFHPESILTTHGARLLEQTLAWALA</sequence>
<proteinExistence type="inferred from homology"/>